<comment type="function">
    <text evidence="1">Involved in the post-transcriptional modification of the uridine at the wobble position (U34) of tRNA(Lys), tRNA(Glu) and tRNA(Gln). Catalyzes the conversion of 2-thiouridine (S2U-RNA) to 2-selenouridine (Se2U-RNA). Acts in a two-step process involving geranylation of 2-thiouridine (S2U) to S-geranyl-2-thiouridine (geS2U) and subsequent selenation of the latter derivative to 2-selenouridine (Se2U) in the tRNA chain.</text>
</comment>
<comment type="catalytic activity">
    <reaction evidence="1">
        <text>5-methylaminomethyl-2-thiouridine(34) in tRNA + selenophosphate + (2E)-geranyl diphosphate + H2O + H(+) = 5-methylaminomethyl-2-selenouridine(34) in tRNA + (2E)-thiogeraniol + phosphate + diphosphate</text>
        <dbReference type="Rhea" id="RHEA:42716"/>
        <dbReference type="Rhea" id="RHEA-COMP:10195"/>
        <dbReference type="Rhea" id="RHEA-COMP:10196"/>
        <dbReference type="ChEBI" id="CHEBI:15377"/>
        <dbReference type="ChEBI" id="CHEBI:15378"/>
        <dbReference type="ChEBI" id="CHEBI:16144"/>
        <dbReference type="ChEBI" id="CHEBI:33019"/>
        <dbReference type="ChEBI" id="CHEBI:43474"/>
        <dbReference type="ChEBI" id="CHEBI:58057"/>
        <dbReference type="ChEBI" id="CHEBI:74455"/>
        <dbReference type="ChEBI" id="CHEBI:82743"/>
        <dbReference type="ChEBI" id="CHEBI:143703"/>
        <dbReference type="EC" id="2.9.1.3"/>
    </reaction>
    <physiologicalReaction direction="left-to-right" evidence="1">
        <dbReference type="Rhea" id="RHEA:42717"/>
    </physiologicalReaction>
</comment>
<comment type="catalytic activity">
    <reaction evidence="1">
        <text>5-methylaminomethyl-2-thiouridine(34) in tRNA + (2E)-geranyl diphosphate = 5-methylaminomethyl-S-(2E)-geranyl-thiouridine(34) in tRNA + diphosphate</text>
        <dbReference type="Rhea" id="RHEA:14085"/>
        <dbReference type="Rhea" id="RHEA-COMP:10195"/>
        <dbReference type="Rhea" id="RHEA-COMP:14654"/>
        <dbReference type="ChEBI" id="CHEBI:33019"/>
        <dbReference type="ChEBI" id="CHEBI:58057"/>
        <dbReference type="ChEBI" id="CHEBI:74455"/>
        <dbReference type="ChEBI" id="CHEBI:140632"/>
    </reaction>
    <physiologicalReaction direction="left-to-right" evidence="1">
        <dbReference type="Rhea" id="RHEA:14086"/>
    </physiologicalReaction>
</comment>
<comment type="catalytic activity">
    <reaction evidence="1">
        <text>5-methylaminomethyl-S-(2E)-geranyl-thiouridine(34) in tRNA + selenophosphate + H(+) = 5-methylaminomethyl-2-(Se-phospho)selenouridine(34) in tRNA + (2E)-thiogeraniol</text>
        <dbReference type="Rhea" id="RHEA:60172"/>
        <dbReference type="Rhea" id="RHEA-COMP:14654"/>
        <dbReference type="Rhea" id="RHEA-COMP:15523"/>
        <dbReference type="ChEBI" id="CHEBI:15378"/>
        <dbReference type="ChEBI" id="CHEBI:16144"/>
        <dbReference type="ChEBI" id="CHEBI:140632"/>
        <dbReference type="ChEBI" id="CHEBI:143702"/>
        <dbReference type="ChEBI" id="CHEBI:143703"/>
    </reaction>
    <physiologicalReaction direction="left-to-right" evidence="1">
        <dbReference type="Rhea" id="RHEA:60173"/>
    </physiologicalReaction>
</comment>
<comment type="catalytic activity">
    <reaction evidence="1">
        <text>5-methylaminomethyl-2-(Se-phospho)selenouridine(34) in tRNA + H2O = 5-methylaminomethyl-2-selenouridine(34) in tRNA + phosphate</text>
        <dbReference type="Rhea" id="RHEA:60176"/>
        <dbReference type="Rhea" id="RHEA-COMP:10196"/>
        <dbReference type="Rhea" id="RHEA-COMP:15523"/>
        <dbReference type="ChEBI" id="CHEBI:15377"/>
        <dbReference type="ChEBI" id="CHEBI:43474"/>
        <dbReference type="ChEBI" id="CHEBI:82743"/>
        <dbReference type="ChEBI" id="CHEBI:143702"/>
    </reaction>
    <physiologicalReaction direction="left-to-right" evidence="1">
        <dbReference type="Rhea" id="RHEA:60177"/>
    </physiologicalReaction>
</comment>
<comment type="subunit">
    <text evidence="1">Monomer.</text>
</comment>
<comment type="similarity">
    <text evidence="1">Belongs to the SelU family.</text>
</comment>
<accession>Q0AFI5</accession>
<evidence type="ECO:0000255" key="1">
    <source>
        <dbReference type="HAMAP-Rule" id="MF_01622"/>
    </source>
</evidence>
<proteinExistence type="inferred from homology"/>
<reference key="1">
    <citation type="journal article" date="2007" name="Environ. Microbiol.">
        <title>Whole-genome analysis of the ammonia-oxidizing bacterium, Nitrosomonas eutropha C91: implications for niche adaptation.</title>
        <authorList>
            <person name="Stein L.Y."/>
            <person name="Arp D.J."/>
            <person name="Berube P.M."/>
            <person name="Chain P.S."/>
            <person name="Hauser L."/>
            <person name="Jetten M.S."/>
            <person name="Klotz M.G."/>
            <person name="Larimer F.W."/>
            <person name="Norton J.M."/>
            <person name="Op den Camp H.J.M."/>
            <person name="Shin M."/>
            <person name="Wei X."/>
        </authorList>
    </citation>
    <scope>NUCLEOTIDE SEQUENCE [LARGE SCALE GENOMIC DNA]</scope>
    <source>
        <strain>DSM 101675 / C91 / Nm57</strain>
    </source>
</reference>
<protein>
    <recommendedName>
        <fullName evidence="1">tRNA 2-selenouridine synthase</fullName>
        <ecNumber evidence="1">2.9.1.3</ecNumber>
    </recommendedName>
</protein>
<organism>
    <name type="scientific">Nitrosomonas eutropha (strain DSM 101675 / C91 / Nm57)</name>
    <dbReference type="NCBI Taxonomy" id="335283"/>
    <lineage>
        <taxon>Bacteria</taxon>
        <taxon>Pseudomonadati</taxon>
        <taxon>Pseudomonadota</taxon>
        <taxon>Betaproteobacteria</taxon>
        <taxon>Nitrosomonadales</taxon>
        <taxon>Nitrosomonadaceae</taxon>
        <taxon>Nitrosomonas</taxon>
    </lineage>
</organism>
<gene>
    <name evidence="1" type="primary">selU</name>
    <name type="ordered locus">Neut_1655</name>
</gene>
<keyword id="KW-0711">Selenium</keyword>
<keyword id="KW-0808">Transferase</keyword>
<dbReference type="EC" id="2.9.1.3" evidence="1"/>
<dbReference type="EMBL" id="CP000450">
    <property type="protein sequence ID" value="ABI59897.1"/>
    <property type="molecule type" value="Genomic_DNA"/>
</dbReference>
<dbReference type="RefSeq" id="WP_011634703.1">
    <property type="nucleotide sequence ID" value="NC_008344.1"/>
</dbReference>
<dbReference type="SMR" id="Q0AFI5"/>
<dbReference type="STRING" id="335283.Neut_1655"/>
<dbReference type="KEGG" id="net:Neut_1655"/>
<dbReference type="eggNOG" id="COG2603">
    <property type="taxonomic scope" value="Bacteria"/>
</dbReference>
<dbReference type="HOGENOM" id="CLU_043456_1_0_4"/>
<dbReference type="OrthoDB" id="9808735at2"/>
<dbReference type="Proteomes" id="UP000001966">
    <property type="component" value="Chromosome"/>
</dbReference>
<dbReference type="GO" id="GO:0016765">
    <property type="term" value="F:transferase activity, transferring alkyl or aryl (other than methyl) groups"/>
    <property type="evidence" value="ECO:0007669"/>
    <property type="project" value="UniProtKB-UniRule"/>
</dbReference>
<dbReference type="GO" id="GO:0043828">
    <property type="term" value="F:tRNA 2-selenouridine synthase activity"/>
    <property type="evidence" value="ECO:0007669"/>
    <property type="project" value="UniProtKB-EC"/>
</dbReference>
<dbReference type="GO" id="GO:0002098">
    <property type="term" value="P:tRNA wobble uridine modification"/>
    <property type="evidence" value="ECO:0007669"/>
    <property type="project" value="UniProtKB-UniRule"/>
</dbReference>
<dbReference type="CDD" id="cd01520">
    <property type="entry name" value="RHOD_YbbB"/>
    <property type="match status" value="1"/>
</dbReference>
<dbReference type="Gene3D" id="3.40.250.10">
    <property type="entry name" value="Rhodanese-like domain"/>
    <property type="match status" value="1"/>
</dbReference>
<dbReference type="HAMAP" id="MF_01622">
    <property type="entry name" value="tRNA_sel_U_synth"/>
    <property type="match status" value="1"/>
</dbReference>
<dbReference type="InterPro" id="IPR027417">
    <property type="entry name" value="P-loop_NTPase"/>
</dbReference>
<dbReference type="InterPro" id="IPR001763">
    <property type="entry name" value="Rhodanese-like_dom"/>
</dbReference>
<dbReference type="InterPro" id="IPR036873">
    <property type="entry name" value="Rhodanese-like_dom_sf"/>
</dbReference>
<dbReference type="InterPro" id="IPR017582">
    <property type="entry name" value="SelU"/>
</dbReference>
<dbReference type="NCBIfam" id="NF008750">
    <property type="entry name" value="PRK11784.1-2"/>
    <property type="match status" value="1"/>
</dbReference>
<dbReference type="NCBIfam" id="NF008751">
    <property type="entry name" value="PRK11784.1-3"/>
    <property type="match status" value="1"/>
</dbReference>
<dbReference type="NCBIfam" id="TIGR03167">
    <property type="entry name" value="tRNA_sel_U_synt"/>
    <property type="match status" value="1"/>
</dbReference>
<dbReference type="PANTHER" id="PTHR30401">
    <property type="entry name" value="TRNA 2-SELENOURIDINE SYNTHASE"/>
    <property type="match status" value="1"/>
</dbReference>
<dbReference type="PANTHER" id="PTHR30401:SF0">
    <property type="entry name" value="TRNA 2-SELENOURIDINE SYNTHASE"/>
    <property type="match status" value="1"/>
</dbReference>
<dbReference type="Pfam" id="PF00581">
    <property type="entry name" value="Rhodanese"/>
    <property type="match status" value="1"/>
</dbReference>
<dbReference type="SMART" id="SM00450">
    <property type="entry name" value="RHOD"/>
    <property type="match status" value="1"/>
</dbReference>
<dbReference type="SUPFAM" id="SSF52540">
    <property type="entry name" value="P-loop containing nucleoside triphosphate hydrolases"/>
    <property type="match status" value="1"/>
</dbReference>
<dbReference type="SUPFAM" id="SSF52821">
    <property type="entry name" value="Rhodanese/Cell cycle control phosphatase"/>
    <property type="match status" value="1"/>
</dbReference>
<dbReference type="PROSITE" id="PS50206">
    <property type="entry name" value="RHODANESE_3"/>
    <property type="match status" value="1"/>
</dbReference>
<name>SELU_NITEC</name>
<feature type="chain" id="PRO_0000292702" description="tRNA 2-selenouridine synthase">
    <location>
        <begin position="1"/>
        <end position="388"/>
    </location>
</feature>
<feature type="domain" description="Rhodanese" evidence="1">
    <location>
        <begin position="15"/>
        <end position="138"/>
    </location>
</feature>
<feature type="active site" description="S-selanylcysteine intermediate" evidence="1">
    <location>
        <position position="98"/>
    </location>
</feature>
<sequence>MNNPNIDSDELTALFTADTPLIDVRAPLEFILGSLPGSVNLPILNNEERALVGTTYKQQGSEAAVMLGHEMISGQAKQDRLQQWLDFIRQHPRTVLYCFRGGKRSQITQQWLKDAGVDRPLIIGGYKQARQFLINTIDRFSENHTLLVITGPTGSGKTQLIQEIRNSYPVLDIEALARHRGSAFGGMSLPQPTQIDFENQLAVNLLKLKQNYLFDPVVVEDESRHTGRVYLPASFFEHMRSSEIIWVDEPLNTRVDNIFGDYIVATPIGQAQQARRNTQPLSSATEIQEILCQQALLLFDKYASALQAISKKLGGVRFQEVSQDLENARSSFVNRNEIQSNKTWIEKLVRYYYDPLYLGSLQRRQVNPCFKGSRQAAIDYLRARKQHA</sequence>